<proteinExistence type="inferred from homology"/>
<protein>
    <recommendedName>
        <fullName evidence="1">Large ribosomal subunit protein uL6</fullName>
    </recommendedName>
    <alternativeName>
        <fullName evidence="2">50S ribosomal protein L6</fullName>
    </alternativeName>
</protein>
<keyword id="KW-0687">Ribonucleoprotein</keyword>
<keyword id="KW-0689">Ribosomal protein</keyword>
<keyword id="KW-0694">RNA-binding</keyword>
<keyword id="KW-0699">rRNA-binding</keyword>
<organism>
    <name type="scientific">Histophilus somni (strain 2336)</name>
    <name type="common">Haemophilus somnus</name>
    <dbReference type="NCBI Taxonomy" id="228400"/>
    <lineage>
        <taxon>Bacteria</taxon>
        <taxon>Pseudomonadati</taxon>
        <taxon>Pseudomonadota</taxon>
        <taxon>Gammaproteobacteria</taxon>
        <taxon>Pasteurellales</taxon>
        <taxon>Pasteurellaceae</taxon>
        <taxon>Histophilus</taxon>
    </lineage>
</organism>
<gene>
    <name evidence="1" type="primary">rplF</name>
    <name type="ordered locus">HSM_1968</name>
</gene>
<evidence type="ECO:0000255" key="1">
    <source>
        <dbReference type="HAMAP-Rule" id="MF_01365"/>
    </source>
</evidence>
<evidence type="ECO:0000305" key="2"/>
<sequence>MSRVAKAPVSIPAGVEVKLDGQLLTVKGKNGELSHTIHNSVEVKQDNNQLTFSPRVGIANADAQSGTARALVNAMVIGVNEGFTKKLQLVGVGYRAQMKGNVLVLSLGFSHPIDHVLPAGVTAECPSQTEIVLKSADKQLIGQVAADIRAYRRPEPYKGKGVRYADEVVRMKEAKKK</sequence>
<name>RL6_HISS2</name>
<reference key="1">
    <citation type="submission" date="2008-02" db="EMBL/GenBank/DDBJ databases">
        <title>Complete sequence of Haemophilus somnus 2336.</title>
        <authorList>
            <consortium name="US DOE Joint Genome Institute"/>
            <person name="Siddaramappa S."/>
            <person name="Duncan A.J."/>
            <person name="Challacombe J.F."/>
            <person name="Rainey D."/>
            <person name="Gillaspy A.F."/>
            <person name="Carson M."/>
            <person name="Gipson J."/>
            <person name="Gipson M."/>
            <person name="Bruce D."/>
            <person name="Detter J.C."/>
            <person name="Han C.S."/>
            <person name="Land M."/>
            <person name="Tapia R."/>
            <person name="Thompson L.S."/>
            <person name="Orvis J."/>
            <person name="Zaitshik J."/>
            <person name="Barnes G."/>
            <person name="Brettin T.S."/>
            <person name="Dyer D.W."/>
            <person name="Inzana T.J."/>
        </authorList>
    </citation>
    <scope>NUCLEOTIDE SEQUENCE [LARGE SCALE GENOMIC DNA]</scope>
    <source>
        <strain>2336</strain>
    </source>
</reference>
<feature type="chain" id="PRO_1000087047" description="Large ribosomal subunit protein uL6">
    <location>
        <begin position="1"/>
        <end position="177"/>
    </location>
</feature>
<accession>B0UX29</accession>
<comment type="function">
    <text evidence="1">This protein binds to the 23S rRNA, and is important in its secondary structure. It is located near the subunit interface in the base of the L7/L12 stalk, and near the tRNA binding site of the peptidyltransferase center.</text>
</comment>
<comment type="subunit">
    <text evidence="1">Part of the 50S ribosomal subunit.</text>
</comment>
<comment type="similarity">
    <text evidence="1">Belongs to the universal ribosomal protein uL6 family.</text>
</comment>
<dbReference type="EMBL" id="CP000947">
    <property type="protein sequence ID" value="ACA31763.1"/>
    <property type="molecule type" value="Genomic_DNA"/>
</dbReference>
<dbReference type="RefSeq" id="WP_012341031.1">
    <property type="nucleotide sequence ID" value="NC_010519.1"/>
</dbReference>
<dbReference type="SMR" id="B0UX29"/>
<dbReference type="STRING" id="228400.HSM_1968"/>
<dbReference type="GeneID" id="31488279"/>
<dbReference type="KEGG" id="hsm:HSM_1968"/>
<dbReference type="HOGENOM" id="CLU_065464_1_2_6"/>
<dbReference type="GO" id="GO:0022625">
    <property type="term" value="C:cytosolic large ribosomal subunit"/>
    <property type="evidence" value="ECO:0007669"/>
    <property type="project" value="TreeGrafter"/>
</dbReference>
<dbReference type="GO" id="GO:0019843">
    <property type="term" value="F:rRNA binding"/>
    <property type="evidence" value="ECO:0007669"/>
    <property type="project" value="UniProtKB-UniRule"/>
</dbReference>
<dbReference type="GO" id="GO:0003735">
    <property type="term" value="F:structural constituent of ribosome"/>
    <property type="evidence" value="ECO:0007669"/>
    <property type="project" value="InterPro"/>
</dbReference>
<dbReference type="GO" id="GO:0002181">
    <property type="term" value="P:cytoplasmic translation"/>
    <property type="evidence" value="ECO:0007669"/>
    <property type="project" value="TreeGrafter"/>
</dbReference>
<dbReference type="FunFam" id="3.90.930.12:FF:000001">
    <property type="entry name" value="50S ribosomal protein L6"/>
    <property type="match status" value="1"/>
</dbReference>
<dbReference type="FunFam" id="3.90.930.12:FF:000002">
    <property type="entry name" value="50S ribosomal protein L6"/>
    <property type="match status" value="1"/>
</dbReference>
<dbReference type="Gene3D" id="3.90.930.12">
    <property type="entry name" value="Ribosomal protein L6, alpha-beta domain"/>
    <property type="match status" value="2"/>
</dbReference>
<dbReference type="HAMAP" id="MF_01365_B">
    <property type="entry name" value="Ribosomal_uL6_B"/>
    <property type="match status" value="1"/>
</dbReference>
<dbReference type="InterPro" id="IPR000702">
    <property type="entry name" value="Ribosomal_uL6-like"/>
</dbReference>
<dbReference type="InterPro" id="IPR036789">
    <property type="entry name" value="Ribosomal_uL6-like_a/b-dom_sf"/>
</dbReference>
<dbReference type="InterPro" id="IPR020040">
    <property type="entry name" value="Ribosomal_uL6_a/b-dom"/>
</dbReference>
<dbReference type="InterPro" id="IPR019906">
    <property type="entry name" value="Ribosomal_uL6_bac-type"/>
</dbReference>
<dbReference type="InterPro" id="IPR002358">
    <property type="entry name" value="Ribosomal_uL6_CS"/>
</dbReference>
<dbReference type="NCBIfam" id="TIGR03654">
    <property type="entry name" value="L6_bact"/>
    <property type="match status" value="1"/>
</dbReference>
<dbReference type="PANTHER" id="PTHR11655">
    <property type="entry name" value="60S/50S RIBOSOMAL PROTEIN L6/L9"/>
    <property type="match status" value="1"/>
</dbReference>
<dbReference type="PANTHER" id="PTHR11655:SF14">
    <property type="entry name" value="LARGE RIBOSOMAL SUBUNIT PROTEIN UL6M"/>
    <property type="match status" value="1"/>
</dbReference>
<dbReference type="Pfam" id="PF00347">
    <property type="entry name" value="Ribosomal_L6"/>
    <property type="match status" value="2"/>
</dbReference>
<dbReference type="PIRSF" id="PIRSF002162">
    <property type="entry name" value="Ribosomal_L6"/>
    <property type="match status" value="1"/>
</dbReference>
<dbReference type="PRINTS" id="PR00059">
    <property type="entry name" value="RIBOSOMALL6"/>
</dbReference>
<dbReference type="SUPFAM" id="SSF56053">
    <property type="entry name" value="Ribosomal protein L6"/>
    <property type="match status" value="2"/>
</dbReference>
<dbReference type="PROSITE" id="PS00525">
    <property type="entry name" value="RIBOSOMAL_L6_1"/>
    <property type="match status" value="1"/>
</dbReference>